<organism>
    <name type="scientific">Homo sapiens</name>
    <name type="common">Human</name>
    <dbReference type="NCBI Taxonomy" id="9606"/>
    <lineage>
        <taxon>Eukaryota</taxon>
        <taxon>Metazoa</taxon>
        <taxon>Chordata</taxon>
        <taxon>Craniata</taxon>
        <taxon>Vertebrata</taxon>
        <taxon>Euteleostomi</taxon>
        <taxon>Mammalia</taxon>
        <taxon>Eutheria</taxon>
        <taxon>Euarchontoglires</taxon>
        <taxon>Primates</taxon>
        <taxon>Haplorrhini</taxon>
        <taxon>Catarrhini</taxon>
        <taxon>Hominidae</taxon>
        <taxon>Homo</taxon>
    </lineage>
</organism>
<sequence length="287" mass="33292">MAAPRQIPSHIVRLKPSCSTDSSFTRTPVPTVSLASRELPVSSWQVTEPSSKNLWEQICKEYEAEQPPFPEGYKVKQEPVITVAPVEEMLFHGFSAEHYFPVSHFTMISRTPCPQDKSETINPKTCSPKEYLETFIFPVLLPGMASLLHQAKKEKCFERKRTKFIACDFLTEWLYNQNPKRAGEPFTEFFSIPFVEERLKQHPRPPIPLSLLLTEEEAALYIQSFWRACVVRCDPEIQELRQWQKKLREAKHIHQQVKIFWAKQEQKVKCKMEDDAVPAAKMKIPSS</sequence>
<dbReference type="EMBL" id="AF520569">
    <property type="protein sequence ID" value="AAM77339.1"/>
    <property type="molecule type" value="mRNA"/>
</dbReference>
<dbReference type="EMBL" id="AF520570">
    <property type="protein sequence ID" value="AAM77340.1"/>
    <property type="molecule type" value="mRNA"/>
</dbReference>
<dbReference type="EMBL" id="AK315672">
    <property type="protein sequence ID" value="BAG38037.1"/>
    <property type="molecule type" value="mRNA"/>
</dbReference>
<dbReference type="EMBL" id="AC002550">
    <property type="protein sequence ID" value="AAC05807.1"/>
    <property type="molecule type" value="Genomic_DNA"/>
</dbReference>
<dbReference type="EMBL" id="CH471186">
    <property type="protein sequence ID" value="EAW50300.1"/>
    <property type="molecule type" value="Genomic_DNA"/>
</dbReference>
<dbReference type="EMBL" id="BC034823">
    <property type="protein sequence ID" value="AAH34823.1"/>
    <property type="molecule type" value="mRNA"/>
</dbReference>
<dbReference type="CCDS" id="CCDS10580.1">
    <molecule id="Q8N0W5-1"/>
</dbReference>
<dbReference type="RefSeq" id="NP_001292050.1">
    <property type="nucleotide sequence ID" value="NM_001305121.1"/>
</dbReference>
<dbReference type="RefSeq" id="NP_001292051.1">
    <property type="nucleotide sequence ID" value="NM_001305122.1"/>
</dbReference>
<dbReference type="RefSeq" id="NP_001381733.1">
    <molecule id="Q8N0W5-1"/>
    <property type="nucleotide sequence ID" value="NM_001394804.1"/>
</dbReference>
<dbReference type="RefSeq" id="NP_694940.1">
    <molecule id="Q8N0W5-1"/>
    <property type="nucleotide sequence ID" value="NM_153208.3"/>
</dbReference>
<dbReference type="RefSeq" id="XP_016878422.1">
    <property type="nucleotide sequence ID" value="XM_017022933.1"/>
</dbReference>
<dbReference type="SMR" id="Q8N0W5"/>
<dbReference type="BioGRID" id="125852">
    <property type="interactions" value="2"/>
</dbReference>
<dbReference type="FunCoup" id="Q8N0W5">
    <property type="interactions" value="278"/>
</dbReference>
<dbReference type="STRING" id="9606.ENSP00000324901"/>
<dbReference type="GlyGen" id="Q8N0W5">
    <property type="glycosylation" value="2 sites, 1 O-linked glycan (1 site)"/>
</dbReference>
<dbReference type="iPTMnet" id="Q8N0W5"/>
<dbReference type="PhosphoSitePlus" id="Q8N0W5"/>
<dbReference type="BioMuta" id="IQCK"/>
<dbReference type="DMDM" id="74728470"/>
<dbReference type="MassIVE" id="Q8N0W5"/>
<dbReference type="PaxDb" id="9606-ENSP00000324901"/>
<dbReference type="PeptideAtlas" id="Q8N0W5"/>
<dbReference type="ProteomicsDB" id="71474">
    <molecule id="Q8N0W5-1"/>
</dbReference>
<dbReference type="ProteomicsDB" id="71475">
    <molecule id="Q8N0W5-2"/>
</dbReference>
<dbReference type="ProteomicsDB" id="71476">
    <molecule id="Q8N0W5-3"/>
</dbReference>
<dbReference type="Antibodypedia" id="12111">
    <property type="antibodies" value="68 antibodies from 17 providers"/>
</dbReference>
<dbReference type="DNASU" id="124152"/>
<dbReference type="Ensembl" id="ENST00000308214.13">
    <molecule id="Q8N0W5-2"/>
    <property type="protein sequence ID" value="ENSP00000309261.9"/>
    <property type="gene ID" value="ENSG00000174628.17"/>
</dbReference>
<dbReference type="Ensembl" id="ENST00000320394.10">
    <molecule id="Q8N0W5-1"/>
    <property type="protein sequence ID" value="ENSP00000324901.6"/>
    <property type="gene ID" value="ENSG00000174628.17"/>
</dbReference>
<dbReference type="Ensembl" id="ENST00000695302.1">
    <molecule id="Q8N0W5-1"/>
    <property type="protein sequence ID" value="ENSP00000511791.1"/>
    <property type="gene ID" value="ENSG00000174628.17"/>
</dbReference>
<dbReference type="GeneID" id="124152"/>
<dbReference type="KEGG" id="hsa:124152"/>
<dbReference type="MANE-Select" id="ENST00000695302.1">
    <property type="protein sequence ID" value="ENSP00000511791.1"/>
    <property type="RefSeq nucleotide sequence ID" value="NM_153208.3"/>
    <property type="RefSeq protein sequence ID" value="NP_694940.1"/>
</dbReference>
<dbReference type="UCSC" id="uc002dgr.4">
    <molecule id="Q8N0W5-1"/>
    <property type="organism name" value="human"/>
</dbReference>
<dbReference type="AGR" id="HGNC:28556"/>
<dbReference type="CTD" id="124152"/>
<dbReference type="DisGeNET" id="124152"/>
<dbReference type="GeneCards" id="IQCK"/>
<dbReference type="HGNC" id="HGNC:28556">
    <property type="gene designation" value="IQCK"/>
</dbReference>
<dbReference type="HPA" id="ENSG00000174628">
    <property type="expression patterns" value="Low tissue specificity"/>
</dbReference>
<dbReference type="neXtProt" id="NX_Q8N0W5"/>
<dbReference type="OpenTargets" id="ENSG00000174628"/>
<dbReference type="PharmGKB" id="PA145148697"/>
<dbReference type="VEuPathDB" id="HostDB:ENSG00000174628"/>
<dbReference type="eggNOG" id="ENOG502RYCY">
    <property type="taxonomic scope" value="Eukaryota"/>
</dbReference>
<dbReference type="GeneTree" id="ENSGT00390000007907"/>
<dbReference type="HOGENOM" id="CLU_059086_0_0_1"/>
<dbReference type="InParanoid" id="Q8N0W5"/>
<dbReference type="OMA" id="EDKHIHQ"/>
<dbReference type="OrthoDB" id="2155538at2759"/>
<dbReference type="PAN-GO" id="Q8N0W5">
    <property type="GO annotations" value="0 GO annotations based on evolutionary models"/>
</dbReference>
<dbReference type="PhylomeDB" id="Q8N0W5"/>
<dbReference type="TreeFam" id="TF336038"/>
<dbReference type="PathwayCommons" id="Q8N0W5"/>
<dbReference type="BioGRID-ORCS" id="124152">
    <property type="hits" value="8 hits in 1073 CRISPR screens"/>
</dbReference>
<dbReference type="ChiTaRS" id="IQCK">
    <property type="organism name" value="human"/>
</dbReference>
<dbReference type="GenomeRNAi" id="124152"/>
<dbReference type="Pharos" id="Q8N0W5">
    <property type="development level" value="Tdark"/>
</dbReference>
<dbReference type="PRO" id="PR:Q8N0W5"/>
<dbReference type="Proteomes" id="UP000005640">
    <property type="component" value="Chromosome 16"/>
</dbReference>
<dbReference type="RNAct" id="Q8N0W5">
    <property type="molecule type" value="protein"/>
</dbReference>
<dbReference type="Bgee" id="ENSG00000174628">
    <property type="expression patterns" value="Expressed in bronchial epithelial cell and 204 other cell types or tissues"/>
</dbReference>
<dbReference type="ExpressionAtlas" id="Q8N0W5">
    <property type="expression patterns" value="baseline and differential"/>
</dbReference>
<dbReference type="CDD" id="cd22969">
    <property type="entry name" value="DD_IQCK"/>
    <property type="match status" value="1"/>
</dbReference>
<dbReference type="InterPro" id="IPR043408">
    <property type="entry name" value="IQCK"/>
</dbReference>
<dbReference type="PANTHER" id="PTHR34927">
    <property type="entry name" value="IQ DOMAIN-CONTAINING PROTEIN K"/>
    <property type="match status" value="1"/>
</dbReference>
<dbReference type="PANTHER" id="PTHR34927:SF1">
    <property type="entry name" value="IQ DOMAIN-CONTAINING PROTEIN K"/>
    <property type="match status" value="1"/>
</dbReference>
<protein>
    <recommendedName>
        <fullName>IQ domain-containing protein K</fullName>
    </recommendedName>
</protein>
<proteinExistence type="evidence at protein level"/>
<name>IQCK_HUMAN</name>
<feature type="chain" id="PRO_0000282574" description="IQ domain-containing protein K">
    <location>
        <begin position="1"/>
        <end position="287"/>
    </location>
</feature>
<feature type="splice variant" id="VSP_024204" description="In isoform 3." evidence="2">
    <original>RKRTKFIACDFLTEWLYNQNPKRAGEPFTEFFSIPFVEERLKQHPRPPIPL</original>
    <variation>VSCLAGFLYFEILNHSLLSDDSSLSWYHQVVLQMTPSGGKACVWGHLPSSSHTI</variation>
    <location>
        <begin position="159"/>
        <end position="209"/>
    </location>
</feature>
<feature type="splice variant" id="VSP_024205" description="In isoform 2." evidence="1">
    <original>RKRTKFIACDFLTEWLYNQNPKRAGEPFTEF</original>
    <variation>PTAANPTLAPADRRGSSPLHSILLESLCGSL</variation>
    <location>
        <begin position="159"/>
        <end position="189"/>
    </location>
</feature>
<feature type="splice variant" id="VSP_024206" description="In isoform 2." evidence="1">
    <location>
        <begin position="190"/>
        <end position="287"/>
    </location>
</feature>
<feature type="splice variant" id="VSP_024207" description="In isoform 3." evidence="2">
    <location>
        <begin position="210"/>
        <end position="287"/>
    </location>
</feature>
<feature type="sequence variant" id="VAR_031416" description="In dbSNP:rs7191155.">
    <original>L</original>
    <variation>P</variation>
    <location>
        <position position="220"/>
    </location>
</feature>
<reference key="1">
    <citation type="submission" date="2002-06" db="EMBL/GenBank/DDBJ databases">
        <authorList>
            <person name="Chen X.G."/>
            <person name="Li Y."/>
        </authorList>
    </citation>
    <scope>NUCLEOTIDE SEQUENCE [MRNA] (ISOFORMS 1 AND 2)</scope>
    <source>
        <tissue>Heart</tissue>
    </source>
</reference>
<reference key="2">
    <citation type="journal article" date="2004" name="Nat. Genet.">
        <title>Complete sequencing and characterization of 21,243 full-length human cDNAs.</title>
        <authorList>
            <person name="Ota T."/>
            <person name="Suzuki Y."/>
            <person name="Nishikawa T."/>
            <person name="Otsuki T."/>
            <person name="Sugiyama T."/>
            <person name="Irie R."/>
            <person name="Wakamatsu A."/>
            <person name="Hayashi K."/>
            <person name="Sato H."/>
            <person name="Nagai K."/>
            <person name="Kimura K."/>
            <person name="Makita H."/>
            <person name="Sekine M."/>
            <person name="Obayashi M."/>
            <person name="Nishi T."/>
            <person name="Shibahara T."/>
            <person name="Tanaka T."/>
            <person name="Ishii S."/>
            <person name="Yamamoto J."/>
            <person name="Saito K."/>
            <person name="Kawai Y."/>
            <person name="Isono Y."/>
            <person name="Nakamura Y."/>
            <person name="Nagahari K."/>
            <person name="Murakami K."/>
            <person name="Yasuda T."/>
            <person name="Iwayanagi T."/>
            <person name="Wagatsuma M."/>
            <person name="Shiratori A."/>
            <person name="Sudo H."/>
            <person name="Hosoiri T."/>
            <person name="Kaku Y."/>
            <person name="Kodaira H."/>
            <person name="Kondo H."/>
            <person name="Sugawara M."/>
            <person name="Takahashi M."/>
            <person name="Kanda K."/>
            <person name="Yokoi T."/>
            <person name="Furuya T."/>
            <person name="Kikkawa E."/>
            <person name="Omura Y."/>
            <person name="Abe K."/>
            <person name="Kamihara K."/>
            <person name="Katsuta N."/>
            <person name="Sato K."/>
            <person name="Tanikawa M."/>
            <person name="Yamazaki M."/>
            <person name="Ninomiya K."/>
            <person name="Ishibashi T."/>
            <person name="Yamashita H."/>
            <person name="Murakawa K."/>
            <person name="Fujimori K."/>
            <person name="Tanai H."/>
            <person name="Kimata M."/>
            <person name="Watanabe M."/>
            <person name="Hiraoka S."/>
            <person name="Chiba Y."/>
            <person name="Ishida S."/>
            <person name="Ono Y."/>
            <person name="Takiguchi S."/>
            <person name="Watanabe S."/>
            <person name="Yosida M."/>
            <person name="Hotuta T."/>
            <person name="Kusano J."/>
            <person name="Kanehori K."/>
            <person name="Takahashi-Fujii A."/>
            <person name="Hara H."/>
            <person name="Tanase T.-O."/>
            <person name="Nomura Y."/>
            <person name="Togiya S."/>
            <person name="Komai F."/>
            <person name="Hara R."/>
            <person name="Takeuchi K."/>
            <person name="Arita M."/>
            <person name="Imose N."/>
            <person name="Musashino K."/>
            <person name="Yuuki H."/>
            <person name="Oshima A."/>
            <person name="Sasaki N."/>
            <person name="Aotsuka S."/>
            <person name="Yoshikawa Y."/>
            <person name="Matsunawa H."/>
            <person name="Ichihara T."/>
            <person name="Shiohata N."/>
            <person name="Sano S."/>
            <person name="Moriya S."/>
            <person name="Momiyama H."/>
            <person name="Satoh N."/>
            <person name="Takami S."/>
            <person name="Terashima Y."/>
            <person name="Suzuki O."/>
            <person name="Nakagawa S."/>
            <person name="Senoh A."/>
            <person name="Mizoguchi H."/>
            <person name="Goto Y."/>
            <person name="Shimizu F."/>
            <person name="Wakebe H."/>
            <person name="Hishigaki H."/>
            <person name="Watanabe T."/>
            <person name="Sugiyama A."/>
            <person name="Takemoto M."/>
            <person name="Kawakami B."/>
            <person name="Yamazaki M."/>
            <person name="Watanabe K."/>
            <person name="Kumagai A."/>
            <person name="Itakura S."/>
            <person name="Fukuzumi Y."/>
            <person name="Fujimori Y."/>
            <person name="Komiyama M."/>
            <person name="Tashiro H."/>
            <person name="Tanigami A."/>
            <person name="Fujiwara T."/>
            <person name="Ono T."/>
            <person name="Yamada K."/>
            <person name="Fujii Y."/>
            <person name="Ozaki K."/>
            <person name="Hirao M."/>
            <person name="Ohmori Y."/>
            <person name="Kawabata A."/>
            <person name="Hikiji T."/>
            <person name="Kobatake N."/>
            <person name="Inagaki H."/>
            <person name="Ikema Y."/>
            <person name="Okamoto S."/>
            <person name="Okitani R."/>
            <person name="Kawakami T."/>
            <person name="Noguchi S."/>
            <person name="Itoh T."/>
            <person name="Shigeta K."/>
            <person name="Senba T."/>
            <person name="Matsumura K."/>
            <person name="Nakajima Y."/>
            <person name="Mizuno T."/>
            <person name="Morinaga M."/>
            <person name="Sasaki M."/>
            <person name="Togashi T."/>
            <person name="Oyama M."/>
            <person name="Hata H."/>
            <person name="Watanabe M."/>
            <person name="Komatsu T."/>
            <person name="Mizushima-Sugano J."/>
            <person name="Satoh T."/>
            <person name="Shirai Y."/>
            <person name="Takahashi Y."/>
            <person name="Nakagawa K."/>
            <person name="Okumura K."/>
            <person name="Nagase T."/>
            <person name="Nomura N."/>
            <person name="Kikuchi H."/>
            <person name="Masuho Y."/>
            <person name="Yamashita R."/>
            <person name="Nakai K."/>
            <person name="Yada T."/>
            <person name="Nakamura Y."/>
            <person name="Ohara O."/>
            <person name="Isogai T."/>
            <person name="Sugano S."/>
        </authorList>
    </citation>
    <scope>NUCLEOTIDE SEQUENCE [LARGE SCALE MRNA] (ISOFORM 1)</scope>
    <source>
        <tissue>Testis</tissue>
    </source>
</reference>
<reference key="3">
    <citation type="journal article" date="1999" name="Genomics">
        <title>Genome duplications and other features in 12 Mb of DNA sequence from human chromosome 16p and 16q.</title>
        <authorList>
            <person name="Loftus B.J."/>
            <person name="Kim U.-J."/>
            <person name="Sneddon V.P."/>
            <person name="Kalush F."/>
            <person name="Brandon R."/>
            <person name="Fuhrmann J."/>
            <person name="Mason T."/>
            <person name="Crosby M.L."/>
            <person name="Barnstead M."/>
            <person name="Cronin L."/>
            <person name="Mays A.D."/>
            <person name="Cao Y."/>
            <person name="Xu R.X."/>
            <person name="Kang H.-L."/>
            <person name="Mitchell S."/>
            <person name="Eichler E.E."/>
            <person name="Harris P.C."/>
            <person name="Venter J.C."/>
            <person name="Adams M.D."/>
        </authorList>
    </citation>
    <scope>NUCLEOTIDE SEQUENCE [LARGE SCALE GENOMIC DNA]</scope>
</reference>
<reference key="4">
    <citation type="submission" date="2005-07" db="EMBL/GenBank/DDBJ databases">
        <authorList>
            <person name="Mural R.J."/>
            <person name="Istrail S."/>
            <person name="Sutton G.G."/>
            <person name="Florea L."/>
            <person name="Halpern A.L."/>
            <person name="Mobarry C.M."/>
            <person name="Lippert R."/>
            <person name="Walenz B."/>
            <person name="Shatkay H."/>
            <person name="Dew I."/>
            <person name="Miller J.R."/>
            <person name="Flanigan M.J."/>
            <person name="Edwards N.J."/>
            <person name="Bolanos R."/>
            <person name="Fasulo D."/>
            <person name="Halldorsson B.V."/>
            <person name="Hannenhalli S."/>
            <person name="Turner R."/>
            <person name="Yooseph S."/>
            <person name="Lu F."/>
            <person name="Nusskern D.R."/>
            <person name="Shue B.C."/>
            <person name="Zheng X.H."/>
            <person name="Zhong F."/>
            <person name="Delcher A.L."/>
            <person name="Huson D.H."/>
            <person name="Kravitz S.A."/>
            <person name="Mouchard L."/>
            <person name="Reinert K."/>
            <person name="Remington K.A."/>
            <person name="Clark A.G."/>
            <person name="Waterman M.S."/>
            <person name="Eichler E.E."/>
            <person name="Adams M.D."/>
            <person name="Hunkapiller M.W."/>
            <person name="Myers E.W."/>
            <person name="Venter J.C."/>
        </authorList>
    </citation>
    <scope>NUCLEOTIDE SEQUENCE [LARGE SCALE GENOMIC DNA]</scope>
</reference>
<reference key="5">
    <citation type="journal article" date="2004" name="Genome Res.">
        <title>The status, quality, and expansion of the NIH full-length cDNA project: the Mammalian Gene Collection (MGC).</title>
        <authorList>
            <consortium name="The MGC Project Team"/>
        </authorList>
    </citation>
    <scope>NUCLEOTIDE SEQUENCE [LARGE SCALE MRNA] (ISOFORM 1)</scope>
    <source>
        <tissue>Brain</tissue>
    </source>
</reference>
<accession>Q8N0W5</accession>
<accession>B2RDU0</accession>
<accession>O43327</accession>
<accession>Q8NFF4</accession>
<comment type="alternative products">
    <event type="alternative splicing"/>
    <isoform>
        <id>Q8N0W5-1</id>
        <name>1</name>
        <sequence type="displayed"/>
    </isoform>
    <isoform>
        <id>Q8N0W5-2</id>
        <name>2</name>
        <sequence type="described" ref="VSP_024205 VSP_024206"/>
    </isoform>
    <isoform>
        <id>Q8N0W5-3</id>
        <name>3</name>
        <sequence type="described" ref="VSP_024204 VSP_024207"/>
    </isoform>
</comment>
<gene>
    <name type="primary">IQCK</name>
</gene>
<keyword id="KW-0025">Alternative splicing</keyword>
<keyword id="KW-1267">Proteomics identification</keyword>
<keyword id="KW-1185">Reference proteome</keyword>
<evidence type="ECO:0000303" key="1">
    <source ref="1"/>
</evidence>
<evidence type="ECO:0000305" key="2"/>